<reference key="1">
    <citation type="journal article" date="2002" name="Proc. Natl. Acad. Sci. U.S.A.">
        <title>Extensive mosaic structure revealed by the complete genome sequence of uropathogenic Escherichia coli.</title>
        <authorList>
            <person name="Welch R.A."/>
            <person name="Burland V."/>
            <person name="Plunkett G. III"/>
            <person name="Redford P."/>
            <person name="Roesch P."/>
            <person name="Rasko D."/>
            <person name="Buckles E.L."/>
            <person name="Liou S.-R."/>
            <person name="Boutin A."/>
            <person name="Hackett J."/>
            <person name="Stroud D."/>
            <person name="Mayhew G.F."/>
            <person name="Rose D.J."/>
            <person name="Zhou S."/>
            <person name="Schwartz D.C."/>
            <person name="Perna N.T."/>
            <person name="Mobley H.L.T."/>
            <person name="Donnenberg M.S."/>
            <person name="Blattner F.R."/>
        </authorList>
    </citation>
    <scope>NUCLEOTIDE SEQUENCE [LARGE SCALE GENOMIC DNA]</scope>
    <source>
        <strain>CFT073 / ATCC 700928 / UPEC</strain>
    </source>
</reference>
<name>SUCC_ECOL6</name>
<gene>
    <name evidence="2" type="primary">sucC</name>
    <name type="ordered locus">c0805</name>
</gene>
<comment type="function">
    <text evidence="2">Succinyl-CoA synthetase functions in the citric acid cycle (TCA), coupling the hydrolysis of succinyl-CoA to the synthesis of either ATP or GTP and thus represents the only step of substrate-level phosphorylation in the TCA. The beta subunit provides nucleotide specificity of the enzyme and binds the substrate succinate, while the binding sites for coenzyme A and phosphate are found in the alpha subunit.</text>
</comment>
<comment type="catalytic activity">
    <reaction evidence="2">
        <text>succinate + ATP + CoA = succinyl-CoA + ADP + phosphate</text>
        <dbReference type="Rhea" id="RHEA:17661"/>
        <dbReference type="ChEBI" id="CHEBI:30031"/>
        <dbReference type="ChEBI" id="CHEBI:30616"/>
        <dbReference type="ChEBI" id="CHEBI:43474"/>
        <dbReference type="ChEBI" id="CHEBI:57287"/>
        <dbReference type="ChEBI" id="CHEBI:57292"/>
        <dbReference type="ChEBI" id="CHEBI:456216"/>
        <dbReference type="EC" id="6.2.1.5"/>
    </reaction>
    <physiologicalReaction direction="right-to-left" evidence="2">
        <dbReference type="Rhea" id="RHEA:17663"/>
    </physiologicalReaction>
</comment>
<comment type="catalytic activity">
    <reaction evidence="2">
        <text>GTP + succinate + CoA = succinyl-CoA + GDP + phosphate</text>
        <dbReference type="Rhea" id="RHEA:22120"/>
        <dbReference type="ChEBI" id="CHEBI:30031"/>
        <dbReference type="ChEBI" id="CHEBI:37565"/>
        <dbReference type="ChEBI" id="CHEBI:43474"/>
        <dbReference type="ChEBI" id="CHEBI:57287"/>
        <dbReference type="ChEBI" id="CHEBI:57292"/>
        <dbReference type="ChEBI" id="CHEBI:58189"/>
    </reaction>
    <physiologicalReaction direction="right-to-left" evidence="2">
        <dbReference type="Rhea" id="RHEA:22122"/>
    </physiologicalReaction>
</comment>
<comment type="cofactor">
    <cofactor evidence="2">
        <name>Mg(2+)</name>
        <dbReference type="ChEBI" id="CHEBI:18420"/>
    </cofactor>
    <text evidence="2">Binds 1 Mg(2+) ion per subunit.</text>
</comment>
<comment type="pathway">
    <text evidence="2">Carbohydrate metabolism; tricarboxylic acid cycle; succinate from succinyl-CoA (ligase route): step 1/1.</text>
</comment>
<comment type="subunit">
    <text evidence="2">Heterotetramer of two alpha and two beta subunits.</text>
</comment>
<comment type="miscellaneous">
    <text evidence="1">Succinyl-CoA synthetase (SCS) of E.coli catalyzes its reaction via three steps that involve phosphoryl enzyme and enzyme-bound succinyl phosphate as intermediates.</text>
</comment>
<comment type="similarity">
    <text evidence="2">Belongs to the succinate/malate CoA ligase beta subunit family.</text>
</comment>
<sequence length="388" mass="41393">MNLHEYQAKQLFARYGLPAPVGYACTTPREAEEAASKIGAGPWVVKCQVHAGGRGKAGGVKVVNSKEDIRAFAENWLGKRLVTYQTDANGQPVNQILVEAATDIAKELYLGAVVDRSSRRVVFMASTEGGVEIEKVAEETPHLIHKVALDPLTGPMPYQGRELAFKLGLEGKLVQQFTKIFMGLATIFLERDLALIEINPLVITKQGDLICLDGKLGADGNALFRQPDLREMRDQSQEDPREAQAAQWELNYVALDGNIGCMVNGAGLAMGTMDIVKLHGGEPANFLDVGGGATKERVTEAFKIILSDDKVKAVLVNIFGGIVRCDLIADGIIGAVAEVGVNVPVVVRLEGNNAELGAKKLADSGLNIIAAKGLTDAAQQVVAAVEGK</sequence>
<proteinExistence type="inferred from homology"/>
<organism>
    <name type="scientific">Escherichia coli O6:H1 (strain CFT073 / ATCC 700928 / UPEC)</name>
    <dbReference type="NCBI Taxonomy" id="199310"/>
    <lineage>
        <taxon>Bacteria</taxon>
        <taxon>Pseudomonadati</taxon>
        <taxon>Pseudomonadota</taxon>
        <taxon>Gammaproteobacteria</taxon>
        <taxon>Enterobacterales</taxon>
        <taxon>Enterobacteriaceae</taxon>
        <taxon>Escherichia</taxon>
    </lineage>
</organism>
<keyword id="KW-0067">ATP-binding</keyword>
<keyword id="KW-0436">Ligase</keyword>
<keyword id="KW-0460">Magnesium</keyword>
<keyword id="KW-0479">Metal-binding</keyword>
<keyword id="KW-0547">Nucleotide-binding</keyword>
<keyword id="KW-1185">Reference proteome</keyword>
<keyword id="KW-0816">Tricarboxylic acid cycle</keyword>
<accession>P0A837</accession>
<accession>P07460</accession>
<evidence type="ECO:0000250" key="1"/>
<evidence type="ECO:0000255" key="2">
    <source>
        <dbReference type="HAMAP-Rule" id="MF_00558"/>
    </source>
</evidence>
<protein>
    <recommendedName>
        <fullName evidence="2">Succinate--CoA ligase [ADP-forming] subunit beta</fullName>
        <ecNumber evidence="2">6.2.1.5</ecNumber>
    </recommendedName>
    <alternativeName>
        <fullName evidence="2">Succinyl-CoA synthetase subunit beta</fullName>
        <shortName evidence="2">SCS-beta</shortName>
    </alternativeName>
</protein>
<dbReference type="EC" id="6.2.1.5" evidence="2"/>
<dbReference type="EMBL" id="AE014075">
    <property type="protein sequence ID" value="AAN79278.1"/>
    <property type="molecule type" value="Genomic_DNA"/>
</dbReference>
<dbReference type="RefSeq" id="WP_001048602.1">
    <property type="nucleotide sequence ID" value="NZ_CP051263.1"/>
</dbReference>
<dbReference type="SMR" id="P0A837"/>
<dbReference type="STRING" id="199310.c0805"/>
<dbReference type="GeneID" id="93776757"/>
<dbReference type="KEGG" id="ecc:c0805"/>
<dbReference type="eggNOG" id="COG0045">
    <property type="taxonomic scope" value="Bacteria"/>
</dbReference>
<dbReference type="HOGENOM" id="CLU_037430_4_0_6"/>
<dbReference type="BioCyc" id="ECOL199310:C0805-MONOMER"/>
<dbReference type="UniPathway" id="UPA00223">
    <property type="reaction ID" value="UER00999"/>
</dbReference>
<dbReference type="Proteomes" id="UP000001410">
    <property type="component" value="Chromosome"/>
</dbReference>
<dbReference type="GO" id="GO:0005829">
    <property type="term" value="C:cytosol"/>
    <property type="evidence" value="ECO:0007669"/>
    <property type="project" value="TreeGrafter"/>
</dbReference>
<dbReference type="GO" id="GO:0042709">
    <property type="term" value="C:succinate-CoA ligase complex"/>
    <property type="evidence" value="ECO:0007669"/>
    <property type="project" value="TreeGrafter"/>
</dbReference>
<dbReference type="GO" id="GO:0005524">
    <property type="term" value="F:ATP binding"/>
    <property type="evidence" value="ECO:0007669"/>
    <property type="project" value="UniProtKB-UniRule"/>
</dbReference>
<dbReference type="GO" id="GO:0000287">
    <property type="term" value="F:magnesium ion binding"/>
    <property type="evidence" value="ECO:0007669"/>
    <property type="project" value="UniProtKB-UniRule"/>
</dbReference>
<dbReference type="GO" id="GO:0004775">
    <property type="term" value="F:succinate-CoA ligase (ADP-forming) activity"/>
    <property type="evidence" value="ECO:0007669"/>
    <property type="project" value="UniProtKB-UniRule"/>
</dbReference>
<dbReference type="GO" id="GO:0004776">
    <property type="term" value="F:succinate-CoA ligase (GDP-forming) activity"/>
    <property type="evidence" value="ECO:0007669"/>
    <property type="project" value="RHEA"/>
</dbReference>
<dbReference type="GO" id="GO:0006104">
    <property type="term" value="P:succinyl-CoA metabolic process"/>
    <property type="evidence" value="ECO:0007669"/>
    <property type="project" value="TreeGrafter"/>
</dbReference>
<dbReference type="GO" id="GO:0006099">
    <property type="term" value="P:tricarboxylic acid cycle"/>
    <property type="evidence" value="ECO:0007669"/>
    <property type="project" value="UniProtKB-UniRule"/>
</dbReference>
<dbReference type="FunFam" id="3.30.1490.20:FF:000002">
    <property type="entry name" value="Succinate--CoA ligase [ADP-forming] subunit beta"/>
    <property type="match status" value="1"/>
</dbReference>
<dbReference type="FunFam" id="3.30.470.20:FF:000002">
    <property type="entry name" value="Succinate--CoA ligase [ADP-forming] subunit beta"/>
    <property type="match status" value="1"/>
</dbReference>
<dbReference type="FunFam" id="3.40.50.261:FF:000001">
    <property type="entry name" value="Succinate--CoA ligase [ADP-forming] subunit beta"/>
    <property type="match status" value="1"/>
</dbReference>
<dbReference type="Gene3D" id="3.30.1490.20">
    <property type="entry name" value="ATP-grasp fold, A domain"/>
    <property type="match status" value="1"/>
</dbReference>
<dbReference type="Gene3D" id="3.30.470.20">
    <property type="entry name" value="ATP-grasp fold, B domain"/>
    <property type="match status" value="1"/>
</dbReference>
<dbReference type="Gene3D" id="3.40.50.261">
    <property type="entry name" value="Succinyl-CoA synthetase domains"/>
    <property type="match status" value="1"/>
</dbReference>
<dbReference type="HAMAP" id="MF_00558">
    <property type="entry name" value="Succ_CoA_beta"/>
    <property type="match status" value="1"/>
</dbReference>
<dbReference type="InterPro" id="IPR011761">
    <property type="entry name" value="ATP-grasp"/>
</dbReference>
<dbReference type="InterPro" id="IPR013650">
    <property type="entry name" value="ATP-grasp_succ-CoA_synth-type"/>
</dbReference>
<dbReference type="InterPro" id="IPR013815">
    <property type="entry name" value="ATP_grasp_subdomain_1"/>
</dbReference>
<dbReference type="InterPro" id="IPR017866">
    <property type="entry name" value="Succ-CoA_synthase_bsu_CS"/>
</dbReference>
<dbReference type="InterPro" id="IPR005811">
    <property type="entry name" value="SUCC_ACL_C"/>
</dbReference>
<dbReference type="InterPro" id="IPR005809">
    <property type="entry name" value="Succ_CoA_ligase-like_bsu"/>
</dbReference>
<dbReference type="InterPro" id="IPR016102">
    <property type="entry name" value="Succinyl-CoA_synth-like"/>
</dbReference>
<dbReference type="NCBIfam" id="NF001913">
    <property type="entry name" value="PRK00696.1"/>
    <property type="match status" value="1"/>
</dbReference>
<dbReference type="NCBIfam" id="TIGR01016">
    <property type="entry name" value="sucCoAbeta"/>
    <property type="match status" value="1"/>
</dbReference>
<dbReference type="PANTHER" id="PTHR11815:SF10">
    <property type="entry name" value="SUCCINATE--COA LIGASE [GDP-FORMING] SUBUNIT BETA, MITOCHONDRIAL"/>
    <property type="match status" value="1"/>
</dbReference>
<dbReference type="PANTHER" id="PTHR11815">
    <property type="entry name" value="SUCCINYL-COA SYNTHETASE BETA CHAIN"/>
    <property type="match status" value="1"/>
</dbReference>
<dbReference type="Pfam" id="PF08442">
    <property type="entry name" value="ATP-grasp_2"/>
    <property type="match status" value="1"/>
</dbReference>
<dbReference type="Pfam" id="PF00549">
    <property type="entry name" value="Ligase_CoA"/>
    <property type="match status" value="1"/>
</dbReference>
<dbReference type="PIRSF" id="PIRSF001554">
    <property type="entry name" value="SucCS_beta"/>
    <property type="match status" value="1"/>
</dbReference>
<dbReference type="SUPFAM" id="SSF56059">
    <property type="entry name" value="Glutathione synthetase ATP-binding domain-like"/>
    <property type="match status" value="1"/>
</dbReference>
<dbReference type="SUPFAM" id="SSF52210">
    <property type="entry name" value="Succinyl-CoA synthetase domains"/>
    <property type="match status" value="1"/>
</dbReference>
<dbReference type="PROSITE" id="PS50975">
    <property type="entry name" value="ATP_GRASP"/>
    <property type="match status" value="1"/>
</dbReference>
<dbReference type="PROSITE" id="PS01217">
    <property type="entry name" value="SUCCINYL_COA_LIG_3"/>
    <property type="match status" value="1"/>
</dbReference>
<feature type="chain" id="PRO_0000102834" description="Succinate--CoA ligase [ADP-forming] subunit beta">
    <location>
        <begin position="1"/>
        <end position="388"/>
    </location>
</feature>
<feature type="domain" description="ATP-grasp" evidence="2">
    <location>
        <begin position="9"/>
        <end position="244"/>
    </location>
</feature>
<feature type="binding site" evidence="2">
    <location>
        <position position="46"/>
    </location>
    <ligand>
        <name>ATP</name>
        <dbReference type="ChEBI" id="CHEBI:30616"/>
    </ligand>
</feature>
<feature type="binding site" evidence="2">
    <location>
        <begin position="53"/>
        <end position="55"/>
    </location>
    <ligand>
        <name>ATP</name>
        <dbReference type="ChEBI" id="CHEBI:30616"/>
    </ligand>
</feature>
<feature type="binding site" evidence="2">
    <location>
        <position position="99"/>
    </location>
    <ligand>
        <name>ATP</name>
        <dbReference type="ChEBI" id="CHEBI:30616"/>
    </ligand>
</feature>
<feature type="binding site" evidence="2">
    <location>
        <position position="102"/>
    </location>
    <ligand>
        <name>ATP</name>
        <dbReference type="ChEBI" id="CHEBI:30616"/>
    </ligand>
</feature>
<feature type="binding site" evidence="2">
    <location>
        <position position="107"/>
    </location>
    <ligand>
        <name>ATP</name>
        <dbReference type="ChEBI" id="CHEBI:30616"/>
    </ligand>
</feature>
<feature type="binding site" evidence="2">
    <location>
        <position position="199"/>
    </location>
    <ligand>
        <name>Mg(2+)</name>
        <dbReference type="ChEBI" id="CHEBI:18420"/>
    </ligand>
</feature>
<feature type="binding site" evidence="2">
    <location>
        <position position="213"/>
    </location>
    <ligand>
        <name>Mg(2+)</name>
        <dbReference type="ChEBI" id="CHEBI:18420"/>
    </ligand>
</feature>
<feature type="binding site" evidence="2">
    <location>
        <position position="264"/>
    </location>
    <ligand>
        <name>substrate</name>
        <note>ligand shared with subunit alpha</note>
    </ligand>
</feature>
<feature type="binding site" evidence="2">
    <location>
        <begin position="321"/>
        <end position="323"/>
    </location>
    <ligand>
        <name>substrate</name>
        <note>ligand shared with subunit alpha</note>
    </ligand>
</feature>